<keyword id="KW-0328">Glycosyltransferase</keyword>
<keyword id="KW-0460">Magnesium</keyword>
<keyword id="KW-0665">Pyrimidine biosynthesis</keyword>
<keyword id="KW-0808">Transferase</keyword>
<comment type="function">
    <text evidence="1">Catalyzes the transfer of a ribosyl phosphate group from 5-phosphoribose 1-diphosphate to orotate, leading to the formation of orotidine monophosphate (OMP).</text>
</comment>
<comment type="catalytic activity">
    <reaction evidence="1">
        <text>orotidine 5'-phosphate + diphosphate = orotate + 5-phospho-alpha-D-ribose 1-diphosphate</text>
        <dbReference type="Rhea" id="RHEA:10380"/>
        <dbReference type="ChEBI" id="CHEBI:30839"/>
        <dbReference type="ChEBI" id="CHEBI:33019"/>
        <dbReference type="ChEBI" id="CHEBI:57538"/>
        <dbReference type="ChEBI" id="CHEBI:58017"/>
        <dbReference type="EC" id="2.4.2.10"/>
    </reaction>
</comment>
<comment type="cofactor">
    <cofactor evidence="1">
        <name>Mg(2+)</name>
        <dbReference type="ChEBI" id="CHEBI:18420"/>
    </cofactor>
</comment>
<comment type="pathway">
    <text evidence="1">Pyrimidine metabolism; UMP biosynthesis via de novo pathway; UMP from orotate: step 1/2.</text>
</comment>
<comment type="subunit">
    <text evidence="1">Homodimer.</text>
</comment>
<comment type="similarity">
    <text evidence="1">Belongs to the purine/pyrimidine phosphoribosyltransferase family. PyrE subfamily.</text>
</comment>
<dbReference type="EC" id="2.4.2.10" evidence="1"/>
<dbReference type="EMBL" id="CP001113">
    <property type="protein sequence ID" value="ACF62962.1"/>
    <property type="molecule type" value="Genomic_DNA"/>
</dbReference>
<dbReference type="RefSeq" id="WP_000806167.1">
    <property type="nucleotide sequence ID" value="NZ_CCMR01000004.1"/>
</dbReference>
<dbReference type="SMR" id="B4SXE3"/>
<dbReference type="KEGG" id="see:SNSL254_A4013"/>
<dbReference type="HOGENOM" id="CLU_074878_0_1_6"/>
<dbReference type="UniPathway" id="UPA00070">
    <property type="reaction ID" value="UER00119"/>
</dbReference>
<dbReference type="Proteomes" id="UP000008824">
    <property type="component" value="Chromosome"/>
</dbReference>
<dbReference type="GO" id="GO:0005737">
    <property type="term" value="C:cytoplasm"/>
    <property type="evidence" value="ECO:0007669"/>
    <property type="project" value="TreeGrafter"/>
</dbReference>
<dbReference type="GO" id="GO:0000287">
    <property type="term" value="F:magnesium ion binding"/>
    <property type="evidence" value="ECO:0007669"/>
    <property type="project" value="UniProtKB-UniRule"/>
</dbReference>
<dbReference type="GO" id="GO:0004588">
    <property type="term" value="F:orotate phosphoribosyltransferase activity"/>
    <property type="evidence" value="ECO:0007669"/>
    <property type="project" value="UniProtKB-UniRule"/>
</dbReference>
<dbReference type="GO" id="GO:0006207">
    <property type="term" value="P:'de novo' pyrimidine nucleobase biosynthetic process"/>
    <property type="evidence" value="ECO:0007669"/>
    <property type="project" value="TreeGrafter"/>
</dbReference>
<dbReference type="GO" id="GO:0044205">
    <property type="term" value="P:'de novo' UMP biosynthetic process"/>
    <property type="evidence" value="ECO:0007669"/>
    <property type="project" value="UniProtKB-UniRule"/>
</dbReference>
<dbReference type="GO" id="GO:0046132">
    <property type="term" value="P:pyrimidine ribonucleoside biosynthetic process"/>
    <property type="evidence" value="ECO:0007669"/>
    <property type="project" value="TreeGrafter"/>
</dbReference>
<dbReference type="CDD" id="cd06223">
    <property type="entry name" value="PRTases_typeI"/>
    <property type="match status" value="1"/>
</dbReference>
<dbReference type="FunFam" id="3.40.50.2020:FF:000008">
    <property type="entry name" value="Orotate phosphoribosyltransferase"/>
    <property type="match status" value="1"/>
</dbReference>
<dbReference type="Gene3D" id="3.40.50.2020">
    <property type="match status" value="1"/>
</dbReference>
<dbReference type="HAMAP" id="MF_01208">
    <property type="entry name" value="PyrE"/>
    <property type="match status" value="1"/>
</dbReference>
<dbReference type="InterPro" id="IPR023031">
    <property type="entry name" value="OPRT"/>
</dbReference>
<dbReference type="InterPro" id="IPR004467">
    <property type="entry name" value="Or_phspho_trans_dom"/>
</dbReference>
<dbReference type="InterPro" id="IPR000836">
    <property type="entry name" value="PRibTrfase_dom"/>
</dbReference>
<dbReference type="InterPro" id="IPR029057">
    <property type="entry name" value="PRTase-like"/>
</dbReference>
<dbReference type="NCBIfam" id="TIGR00336">
    <property type="entry name" value="pyrE"/>
    <property type="match status" value="1"/>
</dbReference>
<dbReference type="PANTHER" id="PTHR46683">
    <property type="entry name" value="OROTATE PHOSPHORIBOSYLTRANSFERASE 1-RELATED"/>
    <property type="match status" value="1"/>
</dbReference>
<dbReference type="PANTHER" id="PTHR46683:SF1">
    <property type="entry name" value="OROTATE PHOSPHORIBOSYLTRANSFERASE 1-RELATED"/>
    <property type="match status" value="1"/>
</dbReference>
<dbReference type="Pfam" id="PF00156">
    <property type="entry name" value="Pribosyltran"/>
    <property type="match status" value="1"/>
</dbReference>
<dbReference type="SUPFAM" id="SSF53271">
    <property type="entry name" value="PRTase-like"/>
    <property type="match status" value="1"/>
</dbReference>
<dbReference type="PROSITE" id="PS00103">
    <property type="entry name" value="PUR_PYR_PR_TRANSFER"/>
    <property type="match status" value="1"/>
</dbReference>
<organism>
    <name type="scientific">Salmonella newport (strain SL254)</name>
    <dbReference type="NCBI Taxonomy" id="423368"/>
    <lineage>
        <taxon>Bacteria</taxon>
        <taxon>Pseudomonadati</taxon>
        <taxon>Pseudomonadota</taxon>
        <taxon>Gammaproteobacteria</taxon>
        <taxon>Enterobacterales</taxon>
        <taxon>Enterobacteriaceae</taxon>
        <taxon>Salmonella</taxon>
    </lineage>
</organism>
<sequence length="213" mass="23562">MKPYQRQFIEFALNKQVLKFGEFTLKSGRKSPYFFNAGLFNTGRDLALLGRFYAEALVDSGIEFDLLFGPAYKGIPIATTTAVALAEHHDKDLPYCFNRKEAKDHGEGGSLVGSALQGRVMLVDDVITAGTAIRESMEIIQAHGATLAGVLISLDRQERGRGEISAIQEVERDYGCKVISIITLKDLIAYLEEKPDMAEHLAAVRAYREEFGV</sequence>
<feature type="chain" id="PRO_1000138829" description="Orotate phosphoribosyltransferase">
    <location>
        <begin position="1"/>
        <end position="213"/>
    </location>
</feature>
<feature type="binding site" description="in other chain" evidence="1">
    <location>
        <position position="26"/>
    </location>
    <ligand>
        <name>5-phospho-alpha-D-ribose 1-diphosphate</name>
        <dbReference type="ChEBI" id="CHEBI:58017"/>
        <note>ligand shared between dimeric partners</note>
    </ligand>
</feature>
<feature type="binding site" evidence="1">
    <location>
        <begin position="34"/>
        <end position="35"/>
    </location>
    <ligand>
        <name>orotate</name>
        <dbReference type="ChEBI" id="CHEBI:30839"/>
    </ligand>
</feature>
<feature type="binding site" description="in other chain" evidence="1">
    <location>
        <begin position="72"/>
        <end position="73"/>
    </location>
    <ligand>
        <name>5-phospho-alpha-D-ribose 1-diphosphate</name>
        <dbReference type="ChEBI" id="CHEBI:58017"/>
        <note>ligand shared between dimeric partners</note>
    </ligand>
</feature>
<feature type="binding site" evidence="1">
    <location>
        <position position="99"/>
    </location>
    <ligand>
        <name>5-phospho-alpha-D-ribose 1-diphosphate</name>
        <dbReference type="ChEBI" id="CHEBI:58017"/>
        <note>ligand shared between dimeric partners</note>
    </ligand>
</feature>
<feature type="binding site" description="in other chain" evidence="1">
    <location>
        <position position="100"/>
    </location>
    <ligand>
        <name>5-phospho-alpha-D-ribose 1-diphosphate</name>
        <dbReference type="ChEBI" id="CHEBI:58017"/>
        <note>ligand shared between dimeric partners</note>
    </ligand>
</feature>
<feature type="binding site" evidence="1">
    <location>
        <position position="103"/>
    </location>
    <ligand>
        <name>5-phospho-alpha-D-ribose 1-diphosphate</name>
        <dbReference type="ChEBI" id="CHEBI:58017"/>
        <note>ligand shared between dimeric partners</note>
    </ligand>
</feature>
<feature type="binding site" evidence="1">
    <location>
        <position position="105"/>
    </location>
    <ligand>
        <name>5-phospho-alpha-D-ribose 1-diphosphate</name>
        <dbReference type="ChEBI" id="CHEBI:58017"/>
        <note>ligand shared between dimeric partners</note>
    </ligand>
</feature>
<feature type="binding site" description="in other chain" evidence="1">
    <location>
        <begin position="124"/>
        <end position="132"/>
    </location>
    <ligand>
        <name>5-phospho-alpha-D-ribose 1-diphosphate</name>
        <dbReference type="ChEBI" id="CHEBI:58017"/>
        <note>ligand shared between dimeric partners</note>
    </ligand>
</feature>
<feature type="binding site" evidence="1">
    <location>
        <position position="128"/>
    </location>
    <ligand>
        <name>orotate</name>
        <dbReference type="ChEBI" id="CHEBI:30839"/>
    </ligand>
</feature>
<feature type="binding site" evidence="1">
    <location>
        <position position="156"/>
    </location>
    <ligand>
        <name>orotate</name>
        <dbReference type="ChEBI" id="CHEBI:30839"/>
    </ligand>
</feature>
<reference key="1">
    <citation type="journal article" date="2011" name="J. Bacteriol.">
        <title>Comparative genomics of 28 Salmonella enterica isolates: evidence for CRISPR-mediated adaptive sublineage evolution.</title>
        <authorList>
            <person name="Fricke W.F."/>
            <person name="Mammel M.K."/>
            <person name="McDermott P.F."/>
            <person name="Tartera C."/>
            <person name="White D.G."/>
            <person name="Leclerc J.E."/>
            <person name="Ravel J."/>
            <person name="Cebula T.A."/>
        </authorList>
    </citation>
    <scope>NUCLEOTIDE SEQUENCE [LARGE SCALE GENOMIC DNA]</scope>
    <source>
        <strain>SL254</strain>
    </source>
</reference>
<name>PYRE_SALNS</name>
<gene>
    <name evidence="1" type="primary">pyrE</name>
    <name type="ordered locus">SNSL254_A4013</name>
</gene>
<protein>
    <recommendedName>
        <fullName evidence="1">Orotate phosphoribosyltransferase</fullName>
        <shortName evidence="1">OPRT</shortName>
        <shortName evidence="1">OPRTase</shortName>
        <ecNumber evidence="1">2.4.2.10</ecNumber>
    </recommendedName>
</protein>
<evidence type="ECO:0000255" key="1">
    <source>
        <dbReference type="HAMAP-Rule" id="MF_01208"/>
    </source>
</evidence>
<proteinExistence type="inferred from homology"/>
<accession>B4SXE3</accession>